<protein>
    <recommendedName>
        <fullName evidence="1">Glycine--tRNA ligase</fullName>
        <ecNumber evidence="1">6.1.1.14</ecNumber>
    </recommendedName>
    <alternativeName>
        <fullName evidence="1">Glycyl-tRNA synthetase</fullName>
        <shortName evidence="1">GlyRS</shortName>
    </alternativeName>
</protein>
<organism>
    <name type="scientific">Thermococcus gammatolerans (strain DSM 15229 / JCM 11827 / EJ3)</name>
    <dbReference type="NCBI Taxonomy" id="593117"/>
    <lineage>
        <taxon>Archaea</taxon>
        <taxon>Methanobacteriati</taxon>
        <taxon>Methanobacteriota</taxon>
        <taxon>Thermococci</taxon>
        <taxon>Thermococcales</taxon>
        <taxon>Thermococcaceae</taxon>
        <taxon>Thermococcus</taxon>
    </lineage>
</organism>
<gene>
    <name evidence="1" type="primary">glyS</name>
    <name type="ordered locus">TGAM_1737</name>
</gene>
<proteinExistence type="inferred from homology"/>
<keyword id="KW-0030">Aminoacyl-tRNA synthetase</keyword>
<keyword id="KW-0067">ATP-binding</keyword>
<keyword id="KW-0963">Cytoplasm</keyword>
<keyword id="KW-0436">Ligase</keyword>
<keyword id="KW-0547">Nucleotide-binding</keyword>
<keyword id="KW-0648">Protein biosynthesis</keyword>
<keyword id="KW-1185">Reference proteome</keyword>
<dbReference type="EC" id="6.1.1.14" evidence="1"/>
<dbReference type="EMBL" id="CP001398">
    <property type="protein sequence ID" value="ACS34239.1"/>
    <property type="molecule type" value="Genomic_DNA"/>
</dbReference>
<dbReference type="RefSeq" id="WP_015859349.1">
    <property type="nucleotide sequence ID" value="NC_012804.1"/>
</dbReference>
<dbReference type="SMR" id="C5A1H0"/>
<dbReference type="STRING" id="593117.TGAM_1737"/>
<dbReference type="PaxDb" id="593117-TGAM_1737"/>
<dbReference type="GeneID" id="7987456"/>
<dbReference type="KEGG" id="tga:TGAM_1737"/>
<dbReference type="PATRIC" id="fig|593117.10.peg.1744"/>
<dbReference type="eggNOG" id="arCOG00405">
    <property type="taxonomic scope" value="Archaea"/>
</dbReference>
<dbReference type="HOGENOM" id="CLU_015515_1_2_2"/>
<dbReference type="OrthoDB" id="6113at2157"/>
<dbReference type="Proteomes" id="UP000001488">
    <property type="component" value="Chromosome"/>
</dbReference>
<dbReference type="GO" id="GO:0005737">
    <property type="term" value="C:cytoplasm"/>
    <property type="evidence" value="ECO:0007669"/>
    <property type="project" value="UniProtKB-SubCell"/>
</dbReference>
<dbReference type="GO" id="GO:0005524">
    <property type="term" value="F:ATP binding"/>
    <property type="evidence" value="ECO:0007669"/>
    <property type="project" value="UniProtKB-UniRule"/>
</dbReference>
<dbReference type="GO" id="GO:0004820">
    <property type="term" value="F:glycine-tRNA ligase activity"/>
    <property type="evidence" value="ECO:0000250"/>
    <property type="project" value="UniProtKB"/>
</dbReference>
<dbReference type="GO" id="GO:0046983">
    <property type="term" value="F:protein dimerization activity"/>
    <property type="evidence" value="ECO:0000250"/>
    <property type="project" value="UniProtKB"/>
</dbReference>
<dbReference type="GO" id="GO:0006426">
    <property type="term" value="P:glycyl-tRNA aminoacylation"/>
    <property type="evidence" value="ECO:0007669"/>
    <property type="project" value="UniProtKB-UniRule"/>
</dbReference>
<dbReference type="CDD" id="cd00774">
    <property type="entry name" value="GlyRS-like_core"/>
    <property type="match status" value="1"/>
</dbReference>
<dbReference type="CDD" id="cd00858">
    <property type="entry name" value="GlyRS_anticodon"/>
    <property type="match status" value="1"/>
</dbReference>
<dbReference type="FunFam" id="3.30.40.230:FF:000005">
    <property type="entry name" value="Glycine--tRNA ligase"/>
    <property type="match status" value="1"/>
</dbReference>
<dbReference type="FunFam" id="3.30.930.10:FF:000179">
    <property type="entry name" value="Glycine--tRNA ligase"/>
    <property type="match status" value="1"/>
</dbReference>
<dbReference type="FunFam" id="3.40.50.800:FF:000002">
    <property type="entry name" value="Glycine--tRNA ligase"/>
    <property type="match status" value="1"/>
</dbReference>
<dbReference type="Gene3D" id="3.30.40.230">
    <property type="match status" value="1"/>
</dbReference>
<dbReference type="Gene3D" id="3.40.50.800">
    <property type="entry name" value="Anticodon-binding domain"/>
    <property type="match status" value="1"/>
</dbReference>
<dbReference type="Gene3D" id="3.30.930.10">
    <property type="entry name" value="Bira Bifunctional Protein, Domain 2"/>
    <property type="match status" value="2"/>
</dbReference>
<dbReference type="HAMAP" id="MF_00253_A">
    <property type="entry name" value="Gly_tRNA_synth_A"/>
    <property type="match status" value="1"/>
</dbReference>
<dbReference type="InterPro" id="IPR002314">
    <property type="entry name" value="aa-tRNA-synt_IIb"/>
</dbReference>
<dbReference type="InterPro" id="IPR006195">
    <property type="entry name" value="aa-tRNA-synth_II"/>
</dbReference>
<dbReference type="InterPro" id="IPR045864">
    <property type="entry name" value="aa-tRNA-synth_II/BPL/LPL"/>
</dbReference>
<dbReference type="InterPro" id="IPR004154">
    <property type="entry name" value="Anticodon-bd"/>
</dbReference>
<dbReference type="InterPro" id="IPR036621">
    <property type="entry name" value="Anticodon-bd_dom_sf"/>
</dbReference>
<dbReference type="InterPro" id="IPR027031">
    <property type="entry name" value="Gly-tRNA_synthase/POLG2"/>
</dbReference>
<dbReference type="InterPro" id="IPR022960">
    <property type="entry name" value="Gly_tRNA_ligase_arc"/>
</dbReference>
<dbReference type="InterPro" id="IPR033731">
    <property type="entry name" value="GlyRS-like_core"/>
</dbReference>
<dbReference type="InterPro" id="IPR002315">
    <property type="entry name" value="tRNA-synt_gly"/>
</dbReference>
<dbReference type="NCBIfam" id="TIGR00389">
    <property type="entry name" value="glyS_dimeric"/>
    <property type="match status" value="1"/>
</dbReference>
<dbReference type="NCBIfam" id="NF003211">
    <property type="entry name" value="PRK04173.1"/>
    <property type="match status" value="1"/>
</dbReference>
<dbReference type="PANTHER" id="PTHR10745:SF0">
    <property type="entry name" value="GLYCINE--TRNA LIGASE"/>
    <property type="match status" value="1"/>
</dbReference>
<dbReference type="PANTHER" id="PTHR10745">
    <property type="entry name" value="GLYCYL-TRNA SYNTHETASE/DNA POLYMERASE SUBUNIT GAMMA-2"/>
    <property type="match status" value="1"/>
</dbReference>
<dbReference type="Pfam" id="PF03129">
    <property type="entry name" value="HGTP_anticodon"/>
    <property type="match status" value="1"/>
</dbReference>
<dbReference type="Pfam" id="PF00587">
    <property type="entry name" value="tRNA-synt_2b"/>
    <property type="match status" value="1"/>
</dbReference>
<dbReference type="PRINTS" id="PR01043">
    <property type="entry name" value="TRNASYNTHGLY"/>
</dbReference>
<dbReference type="SUPFAM" id="SSF52954">
    <property type="entry name" value="Class II aaRS ABD-related"/>
    <property type="match status" value="1"/>
</dbReference>
<dbReference type="SUPFAM" id="SSF55681">
    <property type="entry name" value="Class II aaRS and biotin synthetases"/>
    <property type="match status" value="1"/>
</dbReference>
<dbReference type="PROSITE" id="PS50862">
    <property type="entry name" value="AA_TRNA_LIGASE_II"/>
    <property type="match status" value="1"/>
</dbReference>
<reference key="1">
    <citation type="journal article" date="2007" name="Genome Biol.">
        <title>Genome analysis and genome-wide proteomics of Thermococcus gammatolerans, the most radioresistant organism known amongst the Archaea.</title>
        <authorList>
            <person name="Zivanovic Y."/>
            <person name="Armengaud J."/>
            <person name="Lagorce A."/>
            <person name="Leplat C."/>
            <person name="Guerin P."/>
            <person name="Dutertre M."/>
            <person name="Anthouard V."/>
            <person name="Forterre P."/>
            <person name="Wincker P."/>
            <person name="Confalonieri F."/>
        </authorList>
    </citation>
    <scope>NUCLEOTIDE SEQUENCE [LARGE SCALE GENOMIC DNA]</scope>
    <source>
        <strain>DSM 15229 / JCM 11827 / EJ3</strain>
    </source>
</reference>
<accession>C5A1H0</accession>
<feature type="chain" id="PRO_1000204582" description="Glycine--tRNA ligase">
    <location>
        <begin position="1"/>
        <end position="570"/>
    </location>
</feature>
<feature type="binding site" evidence="1">
    <location>
        <position position="99"/>
    </location>
    <ligand>
        <name>substrate</name>
    </ligand>
</feature>
<feature type="binding site" evidence="1">
    <location>
        <position position="165"/>
    </location>
    <ligand>
        <name>substrate</name>
    </ligand>
</feature>
<feature type="binding site" evidence="1">
    <location>
        <begin position="197"/>
        <end position="199"/>
    </location>
    <ligand>
        <name>ATP</name>
        <dbReference type="ChEBI" id="CHEBI:30616"/>
    </ligand>
</feature>
<feature type="binding site" evidence="1">
    <location>
        <begin position="207"/>
        <end position="212"/>
    </location>
    <ligand>
        <name>ATP</name>
        <dbReference type="ChEBI" id="CHEBI:30616"/>
    </ligand>
</feature>
<feature type="binding site" evidence="1">
    <location>
        <begin position="212"/>
        <end position="216"/>
    </location>
    <ligand>
        <name>substrate</name>
    </ligand>
</feature>
<feature type="binding site" evidence="1">
    <location>
        <begin position="324"/>
        <end position="325"/>
    </location>
    <ligand>
        <name>ATP</name>
        <dbReference type="ChEBI" id="CHEBI:30616"/>
    </ligand>
</feature>
<feature type="binding site" evidence="1">
    <location>
        <begin position="439"/>
        <end position="443"/>
    </location>
    <ligand>
        <name>substrate</name>
    </ligand>
</feature>
<feature type="binding site" evidence="1">
    <location>
        <begin position="443"/>
        <end position="446"/>
    </location>
    <ligand>
        <name>ATP</name>
        <dbReference type="ChEBI" id="CHEBI:30616"/>
    </ligand>
</feature>
<comment type="function">
    <text evidence="1">Catalyzes the attachment of glycine to tRNA(Gly).</text>
</comment>
<comment type="catalytic activity">
    <reaction evidence="1">
        <text>tRNA(Gly) + glycine + ATP = glycyl-tRNA(Gly) + AMP + diphosphate</text>
        <dbReference type="Rhea" id="RHEA:16013"/>
        <dbReference type="Rhea" id="RHEA-COMP:9664"/>
        <dbReference type="Rhea" id="RHEA-COMP:9683"/>
        <dbReference type="ChEBI" id="CHEBI:30616"/>
        <dbReference type="ChEBI" id="CHEBI:33019"/>
        <dbReference type="ChEBI" id="CHEBI:57305"/>
        <dbReference type="ChEBI" id="CHEBI:78442"/>
        <dbReference type="ChEBI" id="CHEBI:78522"/>
        <dbReference type="ChEBI" id="CHEBI:456215"/>
        <dbReference type="EC" id="6.1.1.14"/>
    </reaction>
</comment>
<comment type="subcellular location">
    <subcellularLocation>
        <location evidence="1">Cytoplasm</location>
    </subcellularLocation>
</comment>
<comment type="similarity">
    <text evidence="1">Belongs to the class-II aminoacyl-tRNA synthetase family.</text>
</comment>
<evidence type="ECO:0000255" key="1">
    <source>
        <dbReference type="HAMAP-Rule" id="MF_00253"/>
    </source>
</evidence>
<name>SYG_THEGJ</name>
<sequence length="570" mass="66518">MGEKPDKYEILQDLMRRRGFAWGSFEIYGGSRGFYDYGPLGATIKRKIEQKIREAFQREGFFELETPDITPEKVFIASGHVEKFVDPLVECRKCGARFRADHIIEEALGMDVEGLSAEELTKLIREHDIRCPECGGELSDVWYFNLMFETKIGPYGDQKGYLRPETAQGIFVNFKRLNAFARNKLPFGVFQIGKAYRNEISPRQGMLRLREFTQAEAEIFFNPSETEHPHFDEVKNEKLRLYPIEHQLKNLGEIELTAEEAVKKGYIMNTFFAYYMVMVKRVLLDIGIPEDKIRFRQQLPEERAHYSRDTWDAEVHSERFGWVECVGIANRGDYDLSRHMRESGADLTVLIHYDEPKIVKRLEVSLNLKRVGPKLRKDAKRINELIKSWNEEKKRELVEILGKEGKITIEGYELEKDDFIIREVEEKITGEKIVPHVLEPSFGIDRPFYLLLENSLVIEEDRTYLKLKKDMAPIEVAVLPLVAKEPLKSIAYEIFRKLQKAGFIVVYDEKDTIGRRYLRYDEIGTPYCVTIDNQTPEDSTVTIRDRDTREQVRVSIEELPSKLRELIFGE</sequence>